<sequence>METKLSLKKRLQQFSKKQLIALIILGAADVFVIAAPYYIKNVVPNLHLYLGITEDEVATLTSIIGYVTLATQLPGGFLANRFSSRKLLFLSEISTGVITFWLATNILTRESQKSNALFVQYCVIWGLWGITSTLIFWTPLWKLASQQATQENQALGFGIQGAANGVWGFIFIFLIALIITAVAYPAGGESSANNPAPFAIYAFIIGGMLLVTGFTVLFFVPEKPIEKYDSHTSLKTAKKNFEQILITLKNWKLWLLSFFLMGMYVFQSTFAYYLLQMMQNAFLAPVILGTVLGGVRTYVLRSAVSVYLGRLADKFRSYILFLMLCTGLGIIFVLMFILLGFGQVGQQQNYALIIVSAILYILTGVLSWGMVTVRYNQVAEIEIGKNNYASSVGLLSFIGFSTDGWLYTVTSVVGKAYTPDGQKNTSIQGYQIIAAICLGIALFGLLCGTIVFLVNTWELKRLGKTDYRWRTLDNA</sequence>
<organism>
    <name type="scientific">Mycoplasma pneumoniae (strain ATCC 29342 / M129 / Subtype 1)</name>
    <name type="common">Mycoplasmoides pneumoniae</name>
    <dbReference type="NCBI Taxonomy" id="272634"/>
    <lineage>
        <taxon>Bacteria</taxon>
        <taxon>Bacillati</taxon>
        <taxon>Mycoplasmatota</taxon>
        <taxon>Mycoplasmoidales</taxon>
        <taxon>Mycoplasmoidaceae</taxon>
        <taxon>Mycoplasmoides</taxon>
    </lineage>
</organism>
<feature type="chain" id="PRO_0000210519" description="Uncharacterized protein MG294 homolog">
    <location>
        <begin position="1"/>
        <end position="475"/>
    </location>
</feature>
<name>Y421_MYCPN</name>
<proteinExistence type="predicted"/>
<comment type="similarity">
    <text evidence="1">To E.coli YihN.</text>
</comment>
<gene>
    <name type="ordered locus">MPN_421</name>
    <name type="ORF">A05_orf475</name>
    <name type="ORF">MP420</name>
</gene>
<keyword id="KW-1185">Reference proteome</keyword>
<protein>
    <recommendedName>
        <fullName>Uncharacterized protein MG294 homolog</fullName>
    </recommendedName>
</protein>
<reference key="1">
    <citation type="journal article" date="1996" name="Nucleic Acids Res.">
        <title>Complete sequence analysis of the genome of the bacterium Mycoplasma pneumoniae.</title>
        <authorList>
            <person name="Himmelreich R."/>
            <person name="Hilbert H."/>
            <person name="Plagens H."/>
            <person name="Pirkl E."/>
            <person name="Li B.-C."/>
            <person name="Herrmann R."/>
        </authorList>
    </citation>
    <scope>NUCLEOTIDE SEQUENCE [LARGE SCALE GENOMIC DNA]</scope>
    <source>
        <strain>ATCC 29342 / M129 / Subtype 1</strain>
    </source>
</reference>
<dbReference type="EMBL" id="U00089">
    <property type="protein sequence ID" value="AAB96068.1"/>
    <property type="molecule type" value="Genomic_DNA"/>
</dbReference>
<dbReference type="PIR" id="S73746">
    <property type="entry name" value="S73746"/>
</dbReference>
<dbReference type="RefSeq" id="NP_110109.1">
    <property type="nucleotide sequence ID" value="NC_000912.1"/>
</dbReference>
<dbReference type="RefSeq" id="WP_010874777.1">
    <property type="nucleotide sequence ID" value="NZ_OU342337.1"/>
</dbReference>
<dbReference type="SMR" id="P75366"/>
<dbReference type="STRING" id="272634.MPN_421"/>
<dbReference type="TCDB" id="2.A.1.52.4">
    <property type="family name" value="the major facilitator superfamily (mfs)"/>
</dbReference>
<dbReference type="EnsemblBacteria" id="AAB96068">
    <property type="protein sequence ID" value="AAB96068"/>
    <property type="gene ID" value="MPN_421"/>
</dbReference>
<dbReference type="KEGG" id="mpn:MPN_421"/>
<dbReference type="PATRIC" id="fig|272634.6.peg.456"/>
<dbReference type="HOGENOM" id="CLU_043790_1_0_14"/>
<dbReference type="OrthoDB" id="391626at2"/>
<dbReference type="BioCyc" id="MPNE272634:G1GJ3-681-MONOMER"/>
<dbReference type="Proteomes" id="UP000000808">
    <property type="component" value="Chromosome"/>
</dbReference>
<dbReference type="GO" id="GO:0022857">
    <property type="term" value="F:transmembrane transporter activity"/>
    <property type="evidence" value="ECO:0007669"/>
    <property type="project" value="InterPro"/>
</dbReference>
<dbReference type="CDD" id="cd06174">
    <property type="entry name" value="MFS"/>
    <property type="match status" value="1"/>
</dbReference>
<dbReference type="Gene3D" id="1.20.1250.20">
    <property type="entry name" value="MFS general substrate transporter like domains"/>
    <property type="match status" value="2"/>
</dbReference>
<dbReference type="InterPro" id="IPR011701">
    <property type="entry name" value="MFS"/>
</dbReference>
<dbReference type="InterPro" id="IPR036259">
    <property type="entry name" value="MFS_trans_sf"/>
</dbReference>
<dbReference type="InterPro" id="IPR052528">
    <property type="entry name" value="Sugar_transport-like"/>
</dbReference>
<dbReference type="PANTHER" id="PTHR23526:SF4">
    <property type="entry name" value="INTEGRAL MEMBRANE TRANSPORT PROTEIN"/>
    <property type="match status" value="1"/>
</dbReference>
<dbReference type="PANTHER" id="PTHR23526">
    <property type="entry name" value="INTEGRAL MEMBRANE TRANSPORT PROTEIN-RELATED"/>
    <property type="match status" value="1"/>
</dbReference>
<dbReference type="Pfam" id="PF07690">
    <property type="entry name" value="MFS_1"/>
    <property type="match status" value="1"/>
</dbReference>
<dbReference type="SUPFAM" id="SSF103473">
    <property type="entry name" value="MFS general substrate transporter"/>
    <property type="match status" value="1"/>
</dbReference>
<evidence type="ECO:0000305" key="1"/>
<accession>P75366</accession>